<accession>Q8R6C9</accession>
<keyword id="KW-0004">4Fe-4S</keyword>
<keyword id="KW-0963">Cytoplasm</keyword>
<keyword id="KW-0408">Iron</keyword>
<keyword id="KW-0411">Iron-sulfur</keyword>
<keyword id="KW-0479">Metal-binding</keyword>
<keyword id="KW-0662">Pyridine nucleotide biosynthesis</keyword>
<keyword id="KW-1185">Reference proteome</keyword>
<keyword id="KW-0808">Transferase</keyword>
<dbReference type="EC" id="2.5.1.72" evidence="2"/>
<dbReference type="EMBL" id="AE009951">
    <property type="protein sequence ID" value="AAL94221.1"/>
    <property type="molecule type" value="Genomic_DNA"/>
</dbReference>
<dbReference type="RefSeq" id="NP_602922.1">
    <property type="nucleotide sequence ID" value="NC_003454.1"/>
</dbReference>
<dbReference type="RefSeq" id="WP_011016069.1">
    <property type="nucleotide sequence ID" value="NZ_CP028101.1"/>
</dbReference>
<dbReference type="SMR" id="Q8R6C9"/>
<dbReference type="FunCoup" id="Q8R6C9">
    <property type="interactions" value="237"/>
</dbReference>
<dbReference type="STRING" id="190304.FN0008"/>
<dbReference type="PaxDb" id="190304-FN0008"/>
<dbReference type="EnsemblBacteria" id="AAL94221">
    <property type="protein sequence ID" value="AAL94221"/>
    <property type="gene ID" value="FN0008"/>
</dbReference>
<dbReference type="GeneID" id="79782859"/>
<dbReference type="KEGG" id="fnu:FN0008"/>
<dbReference type="PATRIC" id="fig|190304.8.peg.600"/>
<dbReference type="eggNOG" id="COG0379">
    <property type="taxonomic scope" value="Bacteria"/>
</dbReference>
<dbReference type="HOGENOM" id="CLU_047382_0_0_0"/>
<dbReference type="InParanoid" id="Q8R6C9"/>
<dbReference type="BioCyc" id="FNUC190304:G1FZS-622-MONOMER"/>
<dbReference type="UniPathway" id="UPA00253">
    <property type="reaction ID" value="UER00327"/>
</dbReference>
<dbReference type="Proteomes" id="UP000002521">
    <property type="component" value="Chromosome"/>
</dbReference>
<dbReference type="GO" id="GO:0005829">
    <property type="term" value="C:cytosol"/>
    <property type="evidence" value="ECO:0000318"/>
    <property type="project" value="GO_Central"/>
</dbReference>
<dbReference type="GO" id="GO:0051539">
    <property type="term" value="F:4 iron, 4 sulfur cluster binding"/>
    <property type="evidence" value="ECO:0000318"/>
    <property type="project" value="GO_Central"/>
</dbReference>
<dbReference type="GO" id="GO:0046872">
    <property type="term" value="F:metal ion binding"/>
    <property type="evidence" value="ECO:0007669"/>
    <property type="project" value="UniProtKB-KW"/>
</dbReference>
<dbReference type="GO" id="GO:0008987">
    <property type="term" value="F:quinolinate synthetase A activity"/>
    <property type="evidence" value="ECO:0000318"/>
    <property type="project" value="GO_Central"/>
</dbReference>
<dbReference type="GO" id="GO:0034628">
    <property type="term" value="P:'de novo' NAD biosynthetic process from L-aspartate"/>
    <property type="evidence" value="ECO:0000318"/>
    <property type="project" value="GO_Central"/>
</dbReference>
<dbReference type="Gene3D" id="3.40.50.10800">
    <property type="entry name" value="NadA-like"/>
    <property type="match status" value="3"/>
</dbReference>
<dbReference type="InterPro" id="IPR003473">
    <property type="entry name" value="NadA"/>
</dbReference>
<dbReference type="InterPro" id="IPR036094">
    <property type="entry name" value="NadA_sf"/>
</dbReference>
<dbReference type="NCBIfam" id="TIGR00550">
    <property type="entry name" value="nadA"/>
    <property type="match status" value="1"/>
</dbReference>
<dbReference type="NCBIfam" id="NF006878">
    <property type="entry name" value="PRK09375.1-2"/>
    <property type="match status" value="1"/>
</dbReference>
<dbReference type="PANTHER" id="PTHR30573:SF0">
    <property type="entry name" value="QUINOLINATE SYNTHASE, CHLOROPLASTIC"/>
    <property type="match status" value="1"/>
</dbReference>
<dbReference type="PANTHER" id="PTHR30573">
    <property type="entry name" value="QUINOLINATE SYNTHETASE A"/>
    <property type="match status" value="1"/>
</dbReference>
<dbReference type="Pfam" id="PF02445">
    <property type="entry name" value="NadA"/>
    <property type="match status" value="1"/>
</dbReference>
<dbReference type="SUPFAM" id="SSF142754">
    <property type="entry name" value="NadA-like"/>
    <property type="match status" value="1"/>
</dbReference>
<evidence type="ECO:0000250" key="1"/>
<evidence type="ECO:0000250" key="2">
    <source>
        <dbReference type="UniProtKB" id="O57767"/>
    </source>
</evidence>
<evidence type="ECO:0000305" key="3"/>
<comment type="function">
    <text evidence="2">Catalyzes the condensation of iminoaspartate with dihydroxyacetone phosphate to form quinolinate.</text>
</comment>
<comment type="catalytic activity">
    <reaction evidence="2">
        <text>iminosuccinate + dihydroxyacetone phosphate = quinolinate + phosphate + 2 H2O + H(+)</text>
        <dbReference type="Rhea" id="RHEA:25888"/>
        <dbReference type="ChEBI" id="CHEBI:15377"/>
        <dbReference type="ChEBI" id="CHEBI:15378"/>
        <dbReference type="ChEBI" id="CHEBI:29959"/>
        <dbReference type="ChEBI" id="CHEBI:43474"/>
        <dbReference type="ChEBI" id="CHEBI:57642"/>
        <dbReference type="ChEBI" id="CHEBI:77875"/>
        <dbReference type="EC" id="2.5.1.72"/>
    </reaction>
    <physiologicalReaction direction="left-to-right" evidence="2">
        <dbReference type="Rhea" id="RHEA:25889"/>
    </physiologicalReaction>
</comment>
<comment type="cofactor">
    <cofactor evidence="2">
        <name>[4Fe-4S] cluster</name>
        <dbReference type="ChEBI" id="CHEBI:49883"/>
    </cofactor>
    <text evidence="2">Binds 1 [4Fe-4S] cluster per subunit.</text>
</comment>
<comment type="pathway">
    <text evidence="2">Cofactor biosynthesis; NAD(+) biosynthesis; quinolinate from iminoaspartate: step 1/1.</text>
</comment>
<comment type="subcellular location">
    <subcellularLocation>
        <location evidence="1">Cytoplasm</location>
    </subcellularLocation>
</comment>
<comment type="similarity">
    <text evidence="3">Belongs to the quinolinate synthase family. Type 2 subfamily.</text>
</comment>
<name>NADA_FUSNN</name>
<sequence>MKDRIKKLQKEKDVAILAHYYVDGEVQEIADYVGDSFYLAKTATKLKNKTIIMAGVYFMGESIKILNPEKMVHMVDIYADCPMAHMITIKKIKEMREKYDDLAVVCYINSTAEIKAYCDVCITSSNAVKIVSKLKEKNIFIVPDGNLASYITKQVKNKNIILNKGYCCVHNLVHLENVIKLKNEYPNARVLAHPECKEEILNLADYIGSTSGIIEEVLKDGNEFIIVTERGIQHKIYEKAPNKKLYFADTLICKSMKKNTLEKIEKILLDGGDELEVNDEIAKKALIPLEKMLELAGD</sequence>
<gene>
    <name type="primary">nadA</name>
    <name type="ordered locus">FN0008</name>
</gene>
<proteinExistence type="inferred from homology"/>
<protein>
    <recommendedName>
        <fullName evidence="2">Quinolinate synthase</fullName>
        <ecNumber evidence="2">2.5.1.72</ecNumber>
    </recommendedName>
</protein>
<organism>
    <name type="scientific">Fusobacterium nucleatum subsp. nucleatum (strain ATCC 25586 / DSM 15643 / BCRC 10681 / CIP 101130 / JCM 8532 / KCTC 2640 / LMG 13131 / VPI 4355)</name>
    <dbReference type="NCBI Taxonomy" id="190304"/>
    <lineage>
        <taxon>Bacteria</taxon>
        <taxon>Fusobacteriati</taxon>
        <taxon>Fusobacteriota</taxon>
        <taxon>Fusobacteriia</taxon>
        <taxon>Fusobacteriales</taxon>
        <taxon>Fusobacteriaceae</taxon>
        <taxon>Fusobacterium</taxon>
    </lineage>
</organism>
<reference key="1">
    <citation type="journal article" date="2002" name="J. Bacteriol.">
        <title>Genome sequence and analysis of the oral bacterium Fusobacterium nucleatum strain ATCC 25586.</title>
        <authorList>
            <person name="Kapatral V."/>
            <person name="Anderson I."/>
            <person name="Ivanova N."/>
            <person name="Reznik G."/>
            <person name="Los T."/>
            <person name="Lykidis A."/>
            <person name="Bhattacharyya A."/>
            <person name="Bartman A."/>
            <person name="Gardner W."/>
            <person name="Grechkin G."/>
            <person name="Zhu L."/>
            <person name="Vasieva O."/>
            <person name="Chu L."/>
            <person name="Kogan Y."/>
            <person name="Chaga O."/>
            <person name="Goltsman E."/>
            <person name="Bernal A."/>
            <person name="Larsen N."/>
            <person name="D'Souza M."/>
            <person name="Walunas T."/>
            <person name="Pusch G."/>
            <person name="Haselkorn R."/>
            <person name="Fonstein M."/>
            <person name="Kyrpides N.C."/>
            <person name="Overbeek R."/>
        </authorList>
    </citation>
    <scope>NUCLEOTIDE SEQUENCE [LARGE SCALE GENOMIC DNA]</scope>
    <source>
        <strain>ATCC 25586 / DSM 15643 / BCRC 10681 / CIP 101130 / JCM 8532 / KCTC 2640 / LMG 13131 / VPI 4355</strain>
    </source>
</reference>
<feature type="chain" id="PRO_0000155787" description="Quinolinate synthase">
    <location>
        <begin position="1"/>
        <end position="298"/>
    </location>
</feature>
<feature type="binding site" evidence="2">
    <location>
        <position position="19"/>
    </location>
    <ligand>
        <name>iminosuccinate</name>
        <dbReference type="ChEBI" id="CHEBI:77875"/>
    </ligand>
</feature>
<feature type="binding site" evidence="2">
    <location>
        <position position="36"/>
    </location>
    <ligand>
        <name>iminosuccinate</name>
        <dbReference type="ChEBI" id="CHEBI:77875"/>
    </ligand>
</feature>
<feature type="binding site" evidence="2">
    <location>
        <position position="81"/>
    </location>
    <ligand>
        <name>[4Fe-4S] cluster</name>
        <dbReference type="ChEBI" id="CHEBI:49883"/>
    </ligand>
</feature>
<feature type="binding site" evidence="2">
    <location>
        <begin position="107"/>
        <end position="109"/>
    </location>
    <ligand>
        <name>iminosuccinate</name>
        <dbReference type="ChEBI" id="CHEBI:77875"/>
    </ligand>
</feature>
<feature type="binding site" evidence="2">
    <location>
        <position position="124"/>
    </location>
    <ligand>
        <name>iminosuccinate</name>
        <dbReference type="ChEBI" id="CHEBI:77875"/>
    </ligand>
</feature>
<feature type="binding site" evidence="2">
    <location>
        <position position="167"/>
    </location>
    <ligand>
        <name>[4Fe-4S] cluster</name>
        <dbReference type="ChEBI" id="CHEBI:49883"/>
    </ligand>
</feature>
<feature type="binding site" evidence="2">
    <location>
        <begin position="193"/>
        <end position="195"/>
    </location>
    <ligand>
        <name>iminosuccinate</name>
        <dbReference type="ChEBI" id="CHEBI:77875"/>
    </ligand>
</feature>
<feature type="binding site" evidence="2">
    <location>
        <position position="210"/>
    </location>
    <ligand>
        <name>iminosuccinate</name>
        <dbReference type="ChEBI" id="CHEBI:77875"/>
    </ligand>
</feature>
<feature type="binding site" evidence="2">
    <location>
        <position position="253"/>
    </location>
    <ligand>
        <name>[4Fe-4S] cluster</name>
        <dbReference type="ChEBI" id="CHEBI:49883"/>
    </ligand>
</feature>